<comment type="function">
    <text evidence="1">Catalyzes the reversible oxidation of malate to oxaloacetate.</text>
</comment>
<comment type="catalytic activity">
    <reaction evidence="1">
        <text>(S)-malate + NAD(+) = oxaloacetate + NADH + H(+)</text>
        <dbReference type="Rhea" id="RHEA:21432"/>
        <dbReference type="ChEBI" id="CHEBI:15378"/>
        <dbReference type="ChEBI" id="CHEBI:15589"/>
        <dbReference type="ChEBI" id="CHEBI:16452"/>
        <dbReference type="ChEBI" id="CHEBI:57540"/>
        <dbReference type="ChEBI" id="CHEBI:57945"/>
        <dbReference type="EC" id="1.1.1.37"/>
    </reaction>
</comment>
<comment type="similarity">
    <text evidence="1">Belongs to the LDH/MDH superfamily. MDH type 3 family.</text>
</comment>
<feature type="chain" id="PRO_0000113475" description="Malate dehydrogenase">
    <location>
        <begin position="1"/>
        <end position="324"/>
    </location>
</feature>
<feature type="active site" description="Proton acceptor" evidence="1">
    <location>
        <position position="186"/>
    </location>
</feature>
<feature type="binding site" evidence="1">
    <location>
        <begin position="20"/>
        <end position="25"/>
    </location>
    <ligand>
        <name>NAD(+)</name>
        <dbReference type="ChEBI" id="CHEBI:57540"/>
    </ligand>
</feature>
<feature type="binding site" evidence="1">
    <location>
        <position position="44"/>
    </location>
    <ligand>
        <name>NAD(+)</name>
        <dbReference type="ChEBI" id="CHEBI:57540"/>
    </ligand>
</feature>
<feature type="binding site" evidence="1">
    <location>
        <position position="93"/>
    </location>
    <ligand>
        <name>substrate</name>
    </ligand>
</feature>
<feature type="binding site" evidence="1">
    <location>
        <position position="99"/>
    </location>
    <ligand>
        <name>substrate</name>
    </ligand>
</feature>
<feature type="binding site" evidence="1">
    <location>
        <position position="106"/>
    </location>
    <ligand>
        <name>NAD(+)</name>
        <dbReference type="ChEBI" id="CHEBI:57540"/>
    </ligand>
</feature>
<feature type="binding site" evidence="1">
    <location>
        <begin position="129"/>
        <end position="131"/>
    </location>
    <ligand>
        <name>NAD(+)</name>
        <dbReference type="ChEBI" id="CHEBI:57540"/>
    </ligand>
</feature>
<feature type="binding site" evidence="1">
    <location>
        <position position="131"/>
    </location>
    <ligand>
        <name>substrate</name>
    </ligand>
</feature>
<feature type="binding site" evidence="1">
    <location>
        <position position="162"/>
    </location>
    <ligand>
        <name>substrate</name>
    </ligand>
</feature>
<evidence type="ECO:0000255" key="1">
    <source>
        <dbReference type="HAMAP-Rule" id="MF_00487"/>
    </source>
</evidence>
<protein>
    <recommendedName>
        <fullName evidence="1">Malate dehydrogenase</fullName>
        <ecNumber evidence="1">1.1.1.37</ecNumber>
    </recommendedName>
</protein>
<proteinExistence type="inferred from homology"/>
<reference key="1">
    <citation type="journal article" date="1996" name="DNA Res.">
        <title>Sequence analysis of the genome of the unicellular cyanobacterium Synechocystis sp. strain PCC6803. II. Sequence determination of the entire genome and assignment of potential protein-coding regions.</title>
        <authorList>
            <person name="Kaneko T."/>
            <person name="Sato S."/>
            <person name="Kotani H."/>
            <person name="Tanaka A."/>
            <person name="Asamizu E."/>
            <person name="Nakamura Y."/>
            <person name="Miyajima N."/>
            <person name="Hirosawa M."/>
            <person name="Sugiura M."/>
            <person name="Sasamoto S."/>
            <person name="Kimura T."/>
            <person name="Hosouchi T."/>
            <person name="Matsuno A."/>
            <person name="Muraki A."/>
            <person name="Nakazaki N."/>
            <person name="Naruo K."/>
            <person name="Okumura S."/>
            <person name="Shimpo S."/>
            <person name="Takeuchi C."/>
            <person name="Wada T."/>
            <person name="Watanabe A."/>
            <person name="Yamada M."/>
            <person name="Yasuda M."/>
            <person name="Tabata S."/>
        </authorList>
    </citation>
    <scope>NUCLEOTIDE SEQUENCE [LARGE SCALE GENOMIC DNA]</scope>
    <source>
        <strain>ATCC 27184 / PCC 6803 / Kazusa</strain>
    </source>
</reference>
<keyword id="KW-0520">NAD</keyword>
<keyword id="KW-0560">Oxidoreductase</keyword>
<keyword id="KW-1185">Reference proteome</keyword>
<keyword id="KW-0816">Tricarboxylic acid cycle</keyword>
<organism>
    <name type="scientific">Synechocystis sp. (strain ATCC 27184 / PCC 6803 / Kazusa)</name>
    <dbReference type="NCBI Taxonomy" id="1111708"/>
    <lineage>
        <taxon>Bacteria</taxon>
        <taxon>Bacillati</taxon>
        <taxon>Cyanobacteriota</taxon>
        <taxon>Cyanophyceae</taxon>
        <taxon>Synechococcales</taxon>
        <taxon>Merismopediaceae</taxon>
        <taxon>Synechocystis</taxon>
    </lineage>
</organism>
<sequence length="324" mass="34346">MNILEYAPIACQSWQVTVVGAGNVGRTLAQRLVQQNVANVVLLDIVPGLPQGIALDLMAAQSVEEYDSKIIGTNEYEATAGSDVVVITAGLPRRPGMSRDDLLGKNANIVAQGAREALRYSPNAILIVVTNPLDVMTYLAWKVTGLPSQRVMGMAGVLDSARLKAFIAMKLGACPSDINTLVLGGHGDLMLPLPRYCTVSGVPITELIPPQTIEELVERTRNGGAEIAALLQTGTAYYAPASSAAVMVESILRNQSRILPAATYLDGAYGLKDIFLGVPCRLGCRGVEDILEVQLTPEEKAALHLSAEAVRLNIDVALAMVSDG</sequence>
<gene>
    <name evidence="1" type="primary">mdh</name>
    <name type="ordered locus">sll0891</name>
</gene>
<dbReference type="EC" id="1.1.1.37" evidence="1"/>
<dbReference type="EMBL" id="BA000022">
    <property type="protein sequence ID" value="BAA10470.1"/>
    <property type="molecule type" value="Genomic_DNA"/>
</dbReference>
<dbReference type="PIR" id="S75735">
    <property type="entry name" value="S75735"/>
</dbReference>
<dbReference type="SMR" id="Q55383"/>
<dbReference type="FunCoup" id="Q55383">
    <property type="interactions" value="290"/>
</dbReference>
<dbReference type="STRING" id="1148.gene:10499973"/>
<dbReference type="PaxDb" id="1148-1001230"/>
<dbReference type="EnsemblBacteria" id="BAA10470">
    <property type="protein sequence ID" value="BAA10470"/>
    <property type="gene ID" value="BAA10470"/>
</dbReference>
<dbReference type="KEGG" id="syn:sll0891"/>
<dbReference type="eggNOG" id="COG0039">
    <property type="taxonomic scope" value="Bacteria"/>
</dbReference>
<dbReference type="InParanoid" id="Q55383"/>
<dbReference type="PhylomeDB" id="Q55383"/>
<dbReference type="Proteomes" id="UP000001425">
    <property type="component" value="Chromosome"/>
</dbReference>
<dbReference type="GO" id="GO:0005737">
    <property type="term" value="C:cytoplasm"/>
    <property type="evidence" value="ECO:0000318"/>
    <property type="project" value="GO_Central"/>
</dbReference>
<dbReference type="GO" id="GO:0030060">
    <property type="term" value="F:L-malate dehydrogenase (NAD+) activity"/>
    <property type="evidence" value="ECO:0000318"/>
    <property type="project" value="GO_Central"/>
</dbReference>
<dbReference type="GO" id="GO:0019752">
    <property type="term" value="P:carboxylic acid metabolic process"/>
    <property type="evidence" value="ECO:0007669"/>
    <property type="project" value="InterPro"/>
</dbReference>
<dbReference type="GO" id="GO:0006099">
    <property type="term" value="P:tricarboxylic acid cycle"/>
    <property type="evidence" value="ECO:0007669"/>
    <property type="project" value="UniProtKB-UniRule"/>
</dbReference>
<dbReference type="CDD" id="cd01339">
    <property type="entry name" value="LDH-like_MDH"/>
    <property type="match status" value="1"/>
</dbReference>
<dbReference type="FunFam" id="3.40.50.720:FF:000018">
    <property type="entry name" value="Malate dehydrogenase"/>
    <property type="match status" value="1"/>
</dbReference>
<dbReference type="FunFam" id="3.90.110.10:FF:000004">
    <property type="entry name" value="Malate dehydrogenase"/>
    <property type="match status" value="1"/>
</dbReference>
<dbReference type="Gene3D" id="3.90.110.10">
    <property type="entry name" value="Lactate dehydrogenase/glycoside hydrolase, family 4, C-terminal"/>
    <property type="match status" value="1"/>
</dbReference>
<dbReference type="Gene3D" id="3.40.50.720">
    <property type="entry name" value="NAD(P)-binding Rossmann-like Domain"/>
    <property type="match status" value="1"/>
</dbReference>
<dbReference type="HAMAP" id="MF_00487">
    <property type="entry name" value="Malate_dehydrog_3"/>
    <property type="match status" value="1"/>
</dbReference>
<dbReference type="InterPro" id="IPR001557">
    <property type="entry name" value="L-lactate/malate_DH"/>
</dbReference>
<dbReference type="InterPro" id="IPR022383">
    <property type="entry name" value="Lactate/malate_DH_C"/>
</dbReference>
<dbReference type="InterPro" id="IPR001236">
    <property type="entry name" value="Lactate/malate_DH_N"/>
</dbReference>
<dbReference type="InterPro" id="IPR015955">
    <property type="entry name" value="Lactate_DH/Glyco_Ohase_4_C"/>
</dbReference>
<dbReference type="InterPro" id="IPR011275">
    <property type="entry name" value="Malate_DH_type3"/>
</dbReference>
<dbReference type="InterPro" id="IPR036291">
    <property type="entry name" value="NAD(P)-bd_dom_sf"/>
</dbReference>
<dbReference type="NCBIfam" id="TIGR01763">
    <property type="entry name" value="MalateDH_bact"/>
    <property type="match status" value="1"/>
</dbReference>
<dbReference type="NCBIfam" id="NF004863">
    <property type="entry name" value="PRK06223.1"/>
    <property type="match status" value="1"/>
</dbReference>
<dbReference type="PANTHER" id="PTHR43128">
    <property type="entry name" value="L-2-HYDROXYCARBOXYLATE DEHYDROGENASE (NAD(P)(+))"/>
    <property type="match status" value="1"/>
</dbReference>
<dbReference type="PANTHER" id="PTHR43128:SF16">
    <property type="entry name" value="L-LACTATE DEHYDROGENASE"/>
    <property type="match status" value="1"/>
</dbReference>
<dbReference type="Pfam" id="PF02866">
    <property type="entry name" value="Ldh_1_C"/>
    <property type="match status" value="1"/>
</dbReference>
<dbReference type="Pfam" id="PF00056">
    <property type="entry name" value="Ldh_1_N"/>
    <property type="match status" value="1"/>
</dbReference>
<dbReference type="PIRSF" id="PIRSF000102">
    <property type="entry name" value="Lac_mal_DH"/>
    <property type="match status" value="1"/>
</dbReference>
<dbReference type="PRINTS" id="PR00086">
    <property type="entry name" value="LLDHDRGNASE"/>
</dbReference>
<dbReference type="SUPFAM" id="SSF56327">
    <property type="entry name" value="LDH C-terminal domain-like"/>
    <property type="match status" value="1"/>
</dbReference>
<dbReference type="SUPFAM" id="SSF51735">
    <property type="entry name" value="NAD(P)-binding Rossmann-fold domains"/>
    <property type="match status" value="1"/>
</dbReference>
<name>MDH_SYNY3</name>
<accession>Q55383</accession>